<gene>
    <name type="primary">CPK29</name>
    <name evidence="10" type="ordered locus">At1g76040</name>
    <name evidence="11" type="ORF">T4O12.25</name>
</gene>
<dbReference type="EC" id="2.7.11.1"/>
<dbReference type="EMBL" id="AC007396">
    <property type="protein sequence ID" value="AAF26765.1"/>
    <property type="status" value="ALT_SEQ"/>
    <property type="molecule type" value="Genomic_DNA"/>
</dbReference>
<dbReference type="EMBL" id="CP002684">
    <property type="protein sequence ID" value="AEE35787.1"/>
    <property type="status" value="ALT_INIT"/>
    <property type="molecule type" value="Genomic_DNA"/>
</dbReference>
<dbReference type="EMBL" id="CP002684">
    <property type="protein sequence ID" value="AEE35788.1"/>
    <property type="molecule type" value="Genomic_DNA"/>
</dbReference>
<dbReference type="EMBL" id="CP002684">
    <property type="protein sequence ID" value="ANM58380.1"/>
    <property type="molecule type" value="Genomic_DNA"/>
</dbReference>
<dbReference type="EMBL" id="AY093022">
    <property type="protein sequence ID" value="AAM13021.1"/>
    <property type="molecule type" value="mRNA"/>
</dbReference>
<dbReference type="EMBL" id="BT000401">
    <property type="protein sequence ID" value="AAN15720.1"/>
    <property type="molecule type" value="mRNA"/>
</dbReference>
<dbReference type="RefSeq" id="NP_001319387.1">
    <molecule id="Q8RWL2-2"/>
    <property type="nucleotide sequence ID" value="NM_001334707.1"/>
</dbReference>
<dbReference type="RefSeq" id="NP_177731.2">
    <molecule id="Q8RWL2-2"/>
    <property type="nucleotide sequence ID" value="NM_106253.4"/>
</dbReference>
<dbReference type="RefSeq" id="NP_974150.2">
    <property type="nucleotide sequence ID" value="NM_202421.3"/>
</dbReference>
<dbReference type="SMR" id="Q8RWL2"/>
<dbReference type="FunCoup" id="Q8RWL2">
    <property type="interactions" value="1526"/>
</dbReference>
<dbReference type="STRING" id="3702.Q8RWL2"/>
<dbReference type="iPTMnet" id="Q8RWL2"/>
<dbReference type="SwissPalm" id="Q8RWL2"/>
<dbReference type="PaxDb" id="3702-AT1G76040.2"/>
<dbReference type="ProteomicsDB" id="220470">
    <molecule id="Q8RWL2-1"/>
</dbReference>
<dbReference type="EnsemblPlants" id="AT1G76040.1">
    <molecule id="Q8RWL2-2"/>
    <property type="protein sequence ID" value="AT1G76040.1"/>
    <property type="gene ID" value="AT1G76040"/>
</dbReference>
<dbReference type="EnsemblPlants" id="AT1G76040.4">
    <molecule id="Q8RWL2-2"/>
    <property type="protein sequence ID" value="AT1G76040.4"/>
    <property type="gene ID" value="AT1G76040"/>
</dbReference>
<dbReference type="GeneID" id="843936"/>
<dbReference type="Gramene" id="AT1G76040.1">
    <molecule id="Q8RWL2-2"/>
    <property type="protein sequence ID" value="AT1G76040.1"/>
    <property type="gene ID" value="AT1G76040"/>
</dbReference>
<dbReference type="Gramene" id="AT1G76040.4">
    <molecule id="Q8RWL2-2"/>
    <property type="protein sequence ID" value="AT1G76040.4"/>
    <property type="gene ID" value="AT1G76040"/>
</dbReference>
<dbReference type="KEGG" id="ath:AT1G76040"/>
<dbReference type="Araport" id="AT1G76040"/>
<dbReference type="TAIR" id="AT1G76040">
    <property type="gene designation" value="CPK29"/>
</dbReference>
<dbReference type="eggNOG" id="KOG0032">
    <property type="taxonomic scope" value="Eukaryota"/>
</dbReference>
<dbReference type="InParanoid" id="Q8RWL2"/>
<dbReference type="PhylomeDB" id="Q8RWL2"/>
<dbReference type="PRO" id="PR:Q8RWL2"/>
<dbReference type="Proteomes" id="UP000006548">
    <property type="component" value="Chromosome 1"/>
</dbReference>
<dbReference type="ExpressionAtlas" id="Q8RWL2">
    <property type="expression patterns" value="baseline and differential"/>
</dbReference>
<dbReference type="GO" id="GO:0005737">
    <property type="term" value="C:cytoplasm"/>
    <property type="evidence" value="ECO:0007005"/>
    <property type="project" value="TAIR"/>
</dbReference>
<dbReference type="GO" id="GO:0005739">
    <property type="term" value="C:mitochondrion"/>
    <property type="evidence" value="ECO:0007005"/>
    <property type="project" value="TAIR"/>
</dbReference>
<dbReference type="GO" id="GO:0005634">
    <property type="term" value="C:nucleus"/>
    <property type="evidence" value="ECO:0007005"/>
    <property type="project" value="TAIR"/>
</dbReference>
<dbReference type="GO" id="GO:0005886">
    <property type="term" value="C:plasma membrane"/>
    <property type="evidence" value="ECO:0007005"/>
    <property type="project" value="TAIR"/>
</dbReference>
<dbReference type="GO" id="GO:0005524">
    <property type="term" value="F:ATP binding"/>
    <property type="evidence" value="ECO:0007669"/>
    <property type="project" value="UniProtKB-KW"/>
</dbReference>
<dbReference type="GO" id="GO:0005509">
    <property type="term" value="F:calcium ion binding"/>
    <property type="evidence" value="ECO:0007669"/>
    <property type="project" value="InterPro"/>
</dbReference>
<dbReference type="GO" id="GO:0106310">
    <property type="term" value="F:protein serine kinase activity"/>
    <property type="evidence" value="ECO:0007669"/>
    <property type="project" value="RHEA"/>
</dbReference>
<dbReference type="GO" id="GO:0004674">
    <property type="term" value="F:protein serine/threonine kinase activity"/>
    <property type="evidence" value="ECO:0007669"/>
    <property type="project" value="UniProtKB-KW"/>
</dbReference>
<dbReference type="CDD" id="cd00051">
    <property type="entry name" value="EFh"/>
    <property type="match status" value="1"/>
</dbReference>
<dbReference type="CDD" id="cd05117">
    <property type="entry name" value="STKc_CAMK"/>
    <property type="match status" value="1"/>
</dbReference>
<dbReference type="FunFam" id="1.10.238.10:FF:000015">
    <property type="entry name" value="Calcium-dependent protein kinase 1"/>
    <property type="match status" value="1"/>
</dbReference>
<dbReference type="FunFam" id="3.30.200.20:FF:000004">
    <property type="entry name" value="Calcium-dependent protein kinase 1"/>
    <property type="match status" value="1"/>
</dbReference>
<dbReference type="FunFam" id="1.10.510.10:FF:000056">
    <property type="entry name" value="calcium-dependent protein kinase 1"/>
    <property type="match status" value="1"/>
</dbReference>
<dbReference type="Gene3D" id="1.10.238.10">
    <property type="entry name" value="EF-hand"/>
    <property type="match status" value="1"/>
</dbReference>
<dbReference type="Gene3D" id="3.30.200.20">
    <property type="entry name" value="Phosphorylase Kinase, domain 1"/>
    <property type="match status" value="1"/>
</dbReference>
<dbReference type="Gene3D" id="1.10.510.10">
    <property type="entry name" value="Transferase(Phosphotransferase) domain 1"/>
    <property type="match status" value="1"/>
</dbReference>
<dbReference type="InterPro" id="IPR050205">
    <property type="entry name" value="CDPK_Ser/Thr_kinases"/>
</dbReference>
<dbReference type="InterPro" id="IPR011992">
    <property type="entry name" value="EF-hand-dom_pair"/>
</dbReference>
<dbReference type="InterPro" id="IPR018247">
    <property type="entry name" value="EF_Hand_1_Ca_BS"/>
</dbReference>
<dbReference type="InterPro" id="IPR002048">
    <property type="entry name" value="EF_hand_dom"/>
</dbReference>
<dbReference type="InterPro" id="IPR011009">
    <property type="entry name" value="Kinase-like_dom_sf"/>
</dbReference>
<dbReference type="InterPro" id="IPR000719">
    <property type="entry name" value="Prot_kinase_dom"/>
</dbReference>
<dbReference type="InterPro" id="IPR017441">
    <property type="entry name" value="Protein_kinase_ATP_BS"/>
</dbReference>
<dbReference type="InterPro" id="IPR008271">
    <property type="entry name" value="Ser/Thr_kinase_AS"/>
</dbReference>
<dbReference type="PANTHER" id="PTHR24349">
    <property type="entry name" value="SERINE/THREONINE-PROTEIN KINASE"/>
    <property type="match status" value="1"/>
</dbReference>
<dbReference type="Pfam" id="PF13499">
    <property type="entry name" value="EF-hand_7"/>
    <property type="match status" value="2"/>
</dbReference>
<dbReference type="Pfam" id="PF00069">
    <property type="entry name" value="Pkinase"/>
    <property type="match status" value="1"/>
</dbReference>
<dbReference type="SMART" id="SM00054">
    <property type="entry name" value="EFh"/>
    <property type="match status" value="4"/>
</dbReference>
<dbReference type="SMART" id="SM00220">
    <property type="entry name" value="S_TKc"/>
    <property type="match status" value="1"/>
</dbReference>
<dbReference type="SUPFAM" id="SSF47473">
    <property type="entry name" value="EF-hand"/>
    <property type="match status" value="1"/>
</dbReference>
<dbReference type="SUPFAM" id="SSF56112">
    <property type="entry name" value="Protein kinase-like (PK-like)"/>
    <property type="match status" value="1"/>
</dbReference>
<dbReference type="PROSITE" id="PS00018">
    <property type="entry name" value="EF_HAND_1"/>
    <property type="match status" value="4"/>
</dbReference>
<dbReference type="PROSITE" id="PS50222">
    <property type="entry name" value="EF_HAND_2"/>
    <property type="match status" value="4"/>
</dbReference>
<dbReference type="PROSITE" id="PS00107">
    <property type="entry name" value="PROTEIN_KINASE_ATP"/>
    <property type="match status" value="1"/>
</dbReference>
<dbReference type="PROSITE" id="PS50011">
    <property type="entry name" value="PROTEIN_KINASE_DOM"/>
    <property type="match status" value="1"/>
</dbReference>
<dbReference type="PROSITE" id="PS00108">
    <property type="entry name" value="PROTEIN_KINASE_ST"/>
    <property type="match status" value="1"/>
</dbReference>
<protein>
    <recommendedName>
        <fullName>Calcium-dependent protein kinase 29</fullName>
        <ecNumber>2.7.11.1</ecNumber>
    </recommendedName>
</protein>
<organism>
    <name type="scientific">Arabidopsis thaliana</name>
    <name type="common">Mouse-ear cress</name>
    <dbReference type="NCBI Taxonomy" id="3702"/>
    <lineage>
        <taxon>Eukaryota</taxon>
        <taxon>Viridiplantae</taxon>
        <taxon>Streptophyta</taxon>
        <taxon>Embryophyta</taxon>
        <taxon>Tracheophyta</taxon>
        <taxon>Spermatophyta</taxon>
        <taxon>Magnoliopsida</taxon>
        <taxon>eudicotyledons</taxon>
        <taxon>Gunneridae</taxon>
        <taxon>Pentapetalae</taxon>
        <taxon>rosids</taxon>
        <taxon>malvids</taxon>
        <taxon>Brassicales</taxon>
        <taxon>Brassicaceae</taxon>
        <taxon>Camelineae</taxon>
        <taxon>Arabidopsis</taxon>
    </lineage>
</organism>
<name>CDPKT_ARATH</name>
<evidence type="ECO:0000250" key="1"/>
<evidence type="ECO:0000250" key="2">
    <source>
        <dbReference type="UniProtKB" id="Q9FKW4"/>
    </source>
</evidence>
<evidence type="ECO:0000255" key="3"/>
<evidence type="ECO:0000255" key="4">
    <source>
        <dbReference type="PROSITE-ProRule" id="PRU00159"/>
    </source>
</evidence>
<evidence type="ECO:0000255" key="5">
    <source>
        <dbReference type="PROSITE-ProRule" id="PRU00448"/>
    </source>
</evidence>
<evidence type="ECO:0000255" key="6">
    <source>
        <dbReference type="PROSITE-ProRule" id="PRU10027"/>
    </source>
</evidence>
<evidence type="ECO:0000256" key="7">
    <source>
        <dbReference type="SAM" id="MobiDB-lite"/>
    </source>
</evidence>
<evidence type="ECO:0000303" key="8">
    <source>
    </source>
</evidence>
<evidence type="ECO:0000305" key="9"/>
<evidence type="ECO:0000312" key="10">
    <source>
        <dbReference type="Araport" id="AT1G76040"/>
    </source>
</evidence>
<evidence type="ECO:0000312" key="11">
    <source>
        <dbReference type="EMBL" id="AAF26765.1"/>
    </source>
</evidence>
<reference key="1">
    <citation type="journal article" date="2000" name="Nature">
        <title>Sequence and analysis of chromosome 1 of the plant Arabidopsis thaliana.</title>
        <authorList>
            <person name="Theologis A."/>
            <person name="Ecker J.R."/>
            <person name="Palm C.J."/>
            <person name="Federspiel N.A."/>
            <person name="Kaul S."/>
            <person name="White O."/>
            <person name="Alonso J."/>
            <person name="Altafi H."/>
            <person name="Araujo R."/>
            <person name="Bowman C.L."/>
            <person name="Brooks S.Y."/>
            <person name="Buehler E."/>
            <person name="Chan A."/>
            <person name="Chao Q."/>
            <person name="Chen H."/>
            <person name="Cheuk R.F."/>
            <person name="Chin C.W."/>
            <person name="Chung M.K."/>
            <person name="Conn L."/>
            <person name="Conway A.B."/>
            <person name="Conway A.R."/>
            <person name="Creasy T.H."/>
            <person name="Dewar K."/>
            <person name="Dunn P."/>
            <person name="Etgu P."/>
            <person name="Feldblyum T.V."/>
            <person name="Feng J.-D."/>
            <person name="Fong B."/>
            <person name="Fujii C.Y."/>
            <person name="Gill J.E."/>
            <person name="Goldsmith A.D."/>
            <person name="Haas B."/>
            <person name="Hansen N.F."/>
            <person name="Hughes B."/>
            <person name="Huizar L."/>
            <person name="Hunter J.L."/>
            <person name="Jenkins J."/>
            <person name="Johnson-Hopson C."/>
            <person name="Khan S."/>
            <person name="Khaykin E."/>
            <person name="Kim C.J."/>
            <person name="Koo H.L."/>
            <person name="Kremenetskaia I."/>
            <person name="Kurtz D.B."/>
            <person name="Kwan A."/>
            <person name="Lam B."/>
            <person name="Langin-Hooper S."/>
            <person name="Lee A."/>
            <person name="Lee J.M."/>
            <person name="Lenz C.A."/>
            <person name="Li J.H."/>
            <person name="Li Y.-P."/>
            <person name="Lin X."/>
            <person name="Liu S.X."/>
            <person name="Liu Z.A."/>
            <person name="Luros J.S."/>
            <person name="Maiti R."/>
            <person name="Marziali A."/>
            <person name="Militscher J."/>
            <person name="Miranda M."/>
            <person name="Nguyen M."/>
            <person name="Nierman W.C."/>
            <person name="Osborne B.I."/>
            <person name="Pai G."/>
            <person name="Peterson J."/>
            <person name="Pham P.K."/>
            <person name="Rizzo M."/>
            <person name="Rooney T."/>
            <person name="Rowley D."/>
            <person name="Sakano H."/>
            <person name="Salzberg S.L."/>
            <person name="Schwartz J.R."/>
            <person name="Shinn P."/>
            <person name="Southwick A.M."/>
            <person name="Sun H."/>
            <person name="Tallon L.J."/>
            <person name="Tambunga G."/>
            <person name="Toriumi M.J."/>
            <person name="Town C.D."/>
            <person name="Utterback T."/>
            <person name="Van Aken S."/>
            <person name="Vaysberg M."/>
            <person name="Vysotskaia V.S."/>
            <person name="Walker M."/>
            <person name="Wu D."/>
            <person name="Yu G."/>
            <person name="Fraser C.M."/>
            <person name="Venter J.C."/>
            <person name="Davis R.W."/>
        </authorList>
    </citation>
    <scope>NUCLEOTIDE SEQUENCE [LARGE SCALE GENOMIC DNA]</scope>
    <source>
        <strain>cv. Columbia</strain>
    </source>
</reference>
<reference key="2">
    <citation type="journal article" date="2017" name="Plant J.">
        <title>Araport11: a complete reannotation of the Arabidopsis thaliana reference genome.</title>
        <authorList>
            <person name="Cheng C.Y."/>
            <person name="Krishnakumar V."/>
            <person name="Chan A.P."/>
            <person name="Thibaud-Nissen F."/>
            <person name="Schobel S."/>
            <person name="Town C.D."/>
        </authorList>
    </citation>
    <scope>GENOME REANNOTATION</scope>
    <source>
        <strain>cv. Columbia</strain>
    </source>
</reference>
<reference key="3">
    <citation type="journal article" date="2003" name="Science">
        <title>Empirical analysis of transcriptional activity in the Arabidopsis genome.</title>
        <authorList>
            <person name="Yamada K."/>
            <person name="Lim J."/>
            <person name="Dale J.M."/>
            <person name="Chen H."/>
            <person name="Shinn P."/>
            <person name="Palm C.J."/>
            <person name="Southwick A.M."/>
            <person name="Wu H.C."/>
            <person name="Kim C.J."/>
            <person name="Nguyen M."/>
            <person name="Pham P.K."/>
            <person name="Cheuk R.F."/>
            <person name="Karlin-Newmann G."/>
            <person name="Liu S.X."/>
            <person name="Lam B."/>
            <person name="Sakano H."/>
            <person name="Wu T."/>
            <person name="Yu G."/>
            <person name="Miranda M."/>
            <person name="Quach H.L."/>
            <person name="Tripp M."/>
            <person name="Chang C.H."/>
            <person name="Lee J.M."/>
            <person name="Toriumi M.J."/>
            <person name="Chan M.M."/>
            <person name="Tang C.C."/>
            <person name="Onodera C.S."/>
            <person name="Deng J.M."/>
            <person name="Akiyama K."/>
            <person name="Ansari Y."/>
            <person name="Arakawa T."/>
            <person name="Banh J."/>
            <person name="Banno F."/>
            <person name="Bowser L."/>
            <person name="Brooks S.Y."/>
            <person name="Carninci P."/>
            <person name="Chao Q."/>
            <person name="Choy N."/>
            <person name="Enju A."/>
            <person name="Goldsmith A.D."/>
            <person name="Gurjal M."/>
            <person name="Hansen N.F."/>
            <person name="Hayashizaki Y."/>
            <person name="Johnson-Hopson C."/>
            <person name="Hsuan V.W."/>
            <person name="Iida K."/>
            <person name="Karnes M."/>
            <person name="Khan S."/>
            <person name="Koesema E."/>
            <person name="Ishida J."/>
            <person name="Jiang P.X."/>
            <person name="Jones T."/>
            <person name="Kawai J."/>
            <person name="Kamiya A."/>
            <person name="Meyers C."/>
            <person name="Nakajima M."/>
            <person name="Narusaka M."/>
            <person name="Seki M."/>
            <person name="Sakurai T."/>
            <person name="Satou M."/>
            <person name="Tamse R."/>
            <person name="Vaysberg M."/>
            <person name="Wallender E.K."/>
            <person name="Wong C."/>
            <person name="Yamamura Y."/>
            <person name="Yuan S."/>
            <person name="Shinozaki K."/>
            <person name="Davis R.W."/>
            <person name="Theologis A."/>
            <person name="Ecker J.R."/>
        </authorList>
    </citation>
    <scope>NUCLEOTIDE SEQUENCE [LARGE SCALE MRNA] (ISOFORM 2)</scope>
    <source>
        <strain>cv. Columbia</strain>
    </source>
</reference>
<reference key="4">
    <citation type="journal article" date="2001" name="New Phytol.">
        <title>The CDPK superfamily of protein kinases.</title>
        <authorList>
            <person name="Harmon A.C."/>
            <person name="Gribskov M."/>
            <person name="Gubrium E."/>
            <person name="Harper J.F."/>
        </authorList>
    </citation>
    <scope>GENE FAMILY</scope>
    <scope>NOMENCLATURE</scope>
</reference>
<reference key="5">
    <citation type="journal article" date="2002" name="Plant Physiol.">
        <title>Calcium signaling through protein kinases. The Arabidopsis calcium-dependent protein kinase gene family.</title>
        <authorList>
            <person name="Cheng S.-H."/>
            <person name="Willmann M.R."/>
            <person name="Chen H.-C."/>
            <person name="Sheen J."/>
        </authorList>
    </citation>
    <scope>GENE FAMILY</scope>
    <scope>NOMENCLATURE</scope>
</reference>
<reference key="6">
    <citation type="journal article" date="2003" name="Plant Physiol.">
        <title>The Arabidopsis CDPK-SnRK superfamily of protein kinases.</title>
        <authorList>
            <person name="Hrabak E.M."/>
            <person name="Chan C.W.M."/>
            <person name="Gribskov M."/>
            <person name="Harper J.F."/>
            <person name="Choi J.H."/>
            <person name="Halford N."/>
            <person name="Kudla J."/>
            <person name="Luan S."/>
            <person name="Nimmo H.G."/>
            <person name="Sussman M.R."/>
            <person name="Thomas M."/>
            <person name="Walker-Simmons K."/>
            <person name="Zhu J.-K."/>
            <person name="Harmon A.C."/>
        </authorList>
    </citation>
    <scope>GENE FAMILY</scope>
    <scope>NOMENCLATURE</scope>
</reference>
<accession>Q8RWL2</accession>
<accession>F4I0S0</accession>
<accession>Q9LQR4</accession>
<keyword id="KW-0025">Alternative splicing</keyword>
<keyword id="KW-0067">ATP-binding</keyword>
<keyword id="KW-0106">Calcium</keyword>
<keyword id="KW-0418">Kinase</keyword>
<keyword id="KW-0449">Lipoprotein</keyword>
<keyword id="KW-0472">Membrane</keyword>
<keyword id="KW-0479">Metal-binding</keyword>
<keyword id="KW-0519">Myristate</keyword>
<keyword id="KW-0547">Nucleotide-binding</keyword>
<keyword id="KW-0597">Phosphoprotein</keyword>
<keyword id="KW-1185">Reference proteome</keyword>
<keyword id="KW-0677">Repeat</keyword>
<keyword id="KW-0723">Serine/threonine-protein kinase</keyword>
<keyword id="KW-0808">Transferase</keyword>
<sequence>MGFCFSKFGKSQTHEIPISSSSDSSPPHHYQPLPKPTVSQGQTSNPTSNPQPKPKPAPPPPPSTSSGSQIGPILNRPMIDLSALYDLHKELGRGQFGITYKCTDKSNGREYACKSISKRKLIRRKDIEDVRREVMILQHLTGQPNIVEFRGAYEDKDNLHLVMELCSGGELFDRIIKKGSYSEKEAANIFRQIVNVVHVCHFMGVVHRDLKPENFLLVSNEEDSPIKATDFGLSVFIEEGKVYRDIVGSAYYVAPEVLHRNYGKEIDVWSAGVMLYILLSGVPPFWGETEKTIFEAILEGKLDLETSPWPTISESAKDLIRKMLIRDPKKRITAAEALEHPWMTDTKISDKPINSAVLVRMKQFRAMNKLKKLALKVIAENLSEEEIKGLKQTFKNMDTDESGTITFDELRNGLHRLGSKLTESEIKQLMEAADVDKSGTIDYIEFVTATMHRHRLEKEENLIEAFKYFDKDRSGFITRDELKHSMTEYGMGDDATIDEVINDVDTDNDGRINYEEFVAMMRKGTTDSDPKLIR</sequence>
<comment type="function">
    <text>May play a role in signal transduction pathways that involve calcium as a second messenger.</text>
</comment>
<comment type="catalytic activity">
    <reaction>
        <text>L-seryl-[protein] + ATP = O-phospho-L-seryl-[protein] + ADP + H(+)</text>
        <dbReference type="Rhea" id="RHEA:17989"/>
        <dbReference type="Rhea" id="RHEA-COMP:9863"/>
        <dbReference type="Rhea" id="RHEA-COMP:11604"/>
        <dbReference type="ChEBI" id="CHEBI:15378"/>
        <dbReference type="ChEBI" id="CHEBI:29999"/>
        <dbReference type="ChEBI" id="CHEBI:30616"/>
        <dbReference type="ChEBI" id="CHEBI:83421"/>
        <dbReference type="ChEBI" id="CHEBI:456216"/>
        <dbReference type="EC" id="2.7.11.1"/>
    </reaction>
</comment>
<comment type="catalytic activity">
    <reaction>
        <text>L-threonyl-[protein] + ATP = O-phospho-L-threonyl-[protein] + ADP + H(+)</text>
        <dbReference type="Rhea" id="RHEA:46608"/>
        <dbReference type="Rhea" id="RHEA-COMP:11060"/>
        <dbReference type="Rhea" id="RHEA-COMP:11605"/>
        <dbReference type="ChEBI" id="CHEBI:15378"/>
        <dbReference type="ChEBI" id="CHEBI:30013"/>
        <dbReference type="ChEBI" id="CHEBI:30616"/>
        <dbReference type="ChEBI" id="CHEBI:61977"/>
        <dbReference type="ChEBI" id="CHEBI:456216"/>
        <dbReference type="EC" id="2.7.11.1"/>
    </reaction>
</comment>
<comment type="activity regulation">
    <text evidence="1">Activated by calcium. Autophosphorylation may play an important role in the regulation of the kinase activity (By similarity).</text>
</comment>
<comment type="subcellular location">
    <subcellularLocation>
        <location evidence="9">Membrane</location>
        <topology evidence="9">Lipid-anchor</topology>
    </subcellularLocation>
</comment>
<comment type="alternative products">
    <event type="alternative splicing"/>
    <isoform>
        <id>Q8RWL2-1</id>
        <name>1</name>
        <sequence type="displayed"/>
    </isoform>
    <isoform>
        <id>Q8RWL2-2</id>
        <name>2</name>
        <sequence type="described" ref="VSP_036296 VSP_036297"/>
    </isoform>
</comment>
<comment type="domain">
    <text evidence="1">There are 3 contiguous domains conserved in the CDPK subfamily: a kinase domain, an autoinhibitory (junction) domain and a calmodulin-like domain. The autoinhibitory domain (348-378) inactivates kinase activity under calcium-free conditions (By similarity).</text>
</comment>
<comment type="similarity">
    <text evidence="4">Belongs to the protein kinase superfamily. Ser/Thr protein kinase family. CDPK subfamily.</text>
</comment>
<comment type="sequence caution" evidence="9">
    <conflict type="erroneous gene model prediction">
        <sequence resource="EMBL-CDS" id="AAF26765"/>
    </conflict>
    <text>The predicted gene has been split into 2 genes: At1g76040 and At1g76050.</text>
</comment>
<comment type="sequence caution" evidence="9">
    <conflict type="erroneous initiation">
        <sequence resource="EMBL-CDS" id="AEE35787"/>
    </conflict>
    <text>Extended N-terminus.</text>
</comment>
<feature type="initiator methionine" description="Removed" evidence="3">
    <location>
        <position position="1"/>
    </location>
</feature>
<feature type="chain" id="PRO_0000363351" description="Calcium-dependent protein kinase 29">
    <location>
        <begin position="2"/>
        <end position="534"/>
    </location>
</feature>
<feature type="domain" description="Protein kinase" evidence="4">
    <location>
        <begin position="85"/>
        <end position="343"/>
    </location>
</feature>
<feature type="domain" description="EF-hand 1" evidence="5">
    <location>
        <begin position="385"/>
        <end position="420"/>
    </location>
</feature>
<feature type="domain" description="EF-hand 2" evidence="5">
    <location>
        <begin position="421"/>
        <end position="456"/>
    </location>
</feature>
<feature type="domain" description="EF-hand 3" evidence="5">
    <location>
        <begin position="457"/>
        <end position="492"/>
    </location>
</feature>
<feature type="domain" description="EF-hand 4" evidence="5">
    <location>
        <begin position="493"/>
        <end position="527"/>
    </location>
</feature>
<feature type="region of interest" description="Disordered" evidence="7">
    <location>
        <begin position="1"/>
        <end position="72"/>
    </location>
</feature>
<feature type="region of interest" description="Autoinhibitory domain" evidence="1">
    <location>
        <begin position="348"/>
        <end position="378"/>
    </location>
</feature>
<feature type="compositionally biased region" description="Low complexity" evidence="7">
    <location>
        <begin position="16"/>
        <end position="27"/>
    </location>
</feature>
<feature type="compositionally biased region" description="Pro residues" evidence="7">
    <location>
        <begin position="49"/>
        <end position="63"/>
    </location>
</feature>
<feature type="active site" description="Proton acceptor" evidence="4 6">
    <location>
        <position position="209"/>
    </location>
</feature>
<feature type="binding site" evidence="4">
    <location>
        <begin position="91"/>
        <end position="99"/>
    </location>
    <ligand>
        <name>ATP</name>
        <dbReference type="ChEBI" id="CHEBI:30616"/>
    </ligand>
</feature>
<feature type="binding site" evidence="4">
    <location>
        <position position="114"/>
    </location>
    <ligand>
        <name>ATP</name>
        <dbReference type="ChEBI" id="CHEBI:30616"/>
    </ligand>
</feature>
<feature type="binding site" evidence="5">
    <location>
        <position position="398"/>
    </location>
    <ligand>
        <name>Ca(2+)</name>
        <dbReference type="ChEBI" id="CHEBI:29108"/>
        <label>1</label>
    </ligand>
</feature>
<feature type="binding site" evidence="5">
    <location>
        <position position="400"/>
    </location>
    <ligand>
        <name>Ca(2+)</name>
        <dbReference type="ChEBI" id="CHEBI:29108"/>
        <label>1</label>
    </ligand>
</feature>
<feature type="binding site" evidence="5">
    <location>
        <position position="402"/>
    </location>
    <ligand>
        <name>Ca(2+)</name>
        <dbReference type="ChEBI" id="CHEBI:29108"/>
        <label>1</label>
    </ligand>
</feature>
<feature type="binding site" evidence="5">
    <location>
        <position position="404"/>
    </location>
    <ligand>
        <name>Ca(2+)</name>
        <dbReference type="ChEBI" id="CHEBI:29108"/>
        <label>1</label>
    </ligand>
</feature>
<feature type="binding site" evidence="5">
    <location>
        <position position="409"/>
    </location>
    <ligand>
        <name>Ca(2+)</name>
        <dbReference type="ChEBI" id="CHEBI:29108"/>
        <label>1</label>
    </ligand>
</feature>
<feature type="binding site" evidence="5">
    <location>
        <position position="434"/>
    </location>
    <ligand>
        <name>Ca(2+)</name>
        <dbReference type="ChEBI" id="CHEBI:29108"/>
        <label>2</label>
    </ligand>
</feature>
<feature type="binding site" evidence="5">
    <location>
        <position position="436"/>
    </location>
    <ligand>
        <name>Ca(2+)</name>
        <dbReference type="ChEBI" id="CHEBI:29108"/>
        <label>2</label>
    </ligand>
</feature>
<feature type="binding site" evidence="5">
    <location>
        <position position="438"/>
    </location>
    <ligand>
        <name>Ca(2+)</name>
        <dbReference type="ChEBI" id="CHEBI:29108"/>
        <label>2</label>
    </ligand>
</feature>
<feature type="binding site" evidence="5">
    <location>
        <position position="440"/>
    </location>
    <ligand>
        <name>Ca(2+)</name>
        <dbReference type="ChEBI" id="CHEBI:29108"/>
        <label>2</label>
    </ligand>
</feature>
<feature type="binding site" evidence="5">
    <location>
        <position position="445"/>
    </location>
    <ligand>
        <name>Ca(2+)</name>
        <dbReference type="ChEBI" id="CHEBI:29108"/>
        <label>2</label>
    </ligand>
</feature>
<feature type="binding site" evidence="5">
    <location>
        <position position="470"/>
    </location>
    <ligand>
        <name>Ca(2+)</name>
        <dbReference type="ChEBI" id="CHEBI:29108"/>
        <label>3</label>
    </ligand>
</feature>
<feature type="binding site" evidence="5">
    <location>
        <position position="472"/>
    </location>
    <ligand>
        <name>Ca(2+)</name>
        <dbReference type="ChEBI" id="CHEBI:29108"/>
        <label>3</label>
    </ligand>
</feature>
<feature type="binding site" evidence="5">
    <location>
        <position position="474"/>
    </location>
    <ligand>
        <name>Ca(2+)</name>
        <dbReference type="ChEBI" id="CHEBI:29108"/>
        <label>3</label>
    </ligand>
</feature>
<feature type="binding site" evidence="5">
    <location>
        <position position="481"/>
    </location>
    <ligand>
        <name>Ca(2+)</name>
        <dbReference type="ChEBI" id="CHEBI:29108"/>
        <label>3</label>
    </ligand>
</feature>
<feature type="binding site" evidence="5">
    <location>
        <position position="505"/>
    </location>
    <ligand>
        <name>Ca(2+)</name>
        <dbReference type="ChEBI" id="CHEBI:29108"/>
        <label>4</label>
    </ligand>
</feature>
<feature type="binding site" evidence="5">
    <location>
        <position position="507"/>
    </location>
    <ligand>
        <name>Ca(2+)</name>
        <dbReference type="ChEBI" id="CHEBI:29108"/>
        <label>4</label>
    </ligand>
</feature>
<feature type="binding site" evidence="5">
    <location>
        <position position="509"/>
    </location>
    <ligand>
        <name>Ca(2+)</name>
        <dbReference type="ChEBI" id="CHEBI:29108"/>
        <label>4</label>
    </ligand>
</feature>
<feature type="binding site" evidence="5">
    <location>
        <position position="511"/>
    </location>
    <ligand>
        <name>Ca(2+)</name>
        <dbReference type="ChEBI" id="CHEBI:29108"/>
        <label>4</label>
    </ligand>
</feature>
<feature type="binding site" evidence="5">
    <location>
        <position position="516"/>
    </location>
    <ligand>
        <name>Ca(2+)</name>
        <dbReference type="ChEBI" id="CHEBI:29108"/>
        <label>4</label>
    </ligand>
</feature>
<feature type="modified residue" description="Phosphoserine" evidence="2">
    <location>
        <position position="249"/>
    </location>
</feature>
<feature type="lipid moiety-binding region" description="N-myristoyl glycine" evidence="3">
    <location>
        <position position="2"/>
    </location>
</feature>
<feature type="splice variant" id="VSP_036296" description="In isoform 2." evidence="8">
    <location>
        <begin position="1"/>
        <end position="211"/>
    </location>
</feature>
<feature type="splice variant" id="VSP_036297" description="In isoform 2." evidence="8">
    <original>PENFLLVSNEEDSPIKATDFGLSVFIEE</original>
    <variation>MFECILAKTLVLYFEIRTSNHLIWLIFV</variation>
    <location>
        <begin position="212"/>
        <end position="239"/>
    </location>
</feature>
<proteinExistence type="evidence at transcript level"/>